<gene>
    <name type="primary">BPIFA1</name>
    <name type="synonym">PLUNC</name>
    <name type="synonym">SPLUNC1</name>
</gene>
<protein>
    <recommendedName>
        <fullName>BPI fold-containing family A member 1</fullName>
    </recommendedName>
    <alternativeName>
        <fullName>Lung and nasal epithelium carcinoma-associated protein</fullName>
    </alternativeName>
    <alternativeName>
        <fullName>Palate lung and nasal epithelium clone protein</fullName>
    </alternativeName>
</protein>
<keyword id="KW-0044">Antibiotic</keyword>
<keyword id="KW-0929">Antimicrobial</keyword>
<keyword id="KW-1015">Disulfide bond</keyword>
<keyword id="KW-0325">Glycoprotein</keyword>
<keyword id="KW-0391">Immunity</keyword>
<keyword id="KW-0399">Innate immunity</keyword>
<keyword id="KW-0446">Lipid-binding</keyword>
<keyword id="KW-1185">Reference proteome</keyword>
<keyword id="KW-0964">Secreted</keyword>
<keyword id="KW-0732">Signal</keyword>
<evidence type="ECO:0000250" key="1"/>
<evidence type="ECO:0000250" key="2">
    <source>
        <dbReference type="UniProtKB" id="Q9NP55"/>
    </source>
</evidence>
<evidence type="ECO:0000255" key="3"/>
<evidence type="ECO:0000269" key="4">
    <source>
    </source>
</evidence>
<evidence type="ECO:0000305" key="5"/>
<accession>Q5XW65</accession>
<accession>Q5XW64</accession>
<sequence>MFQVAGLIVFCGLLAQTTALLEALPLGKALPLALDQSPTDLVGSLTSTLSNGLLSEGVLGILGNLPLLDILKAGGNTPSGLLGGLLGKLSSTIPLLNDIVDLQITDPQLLELGLVQSPDGHRLYVTIPLSLVLNVKTSVVGSLLKLAVKLNITVELLAVKDEQGKSHLVLGDCTHSPGSLKISLLDGLGPLVPQDLLDSITGVLDNVLPGLVQGEVCPLVNEVLSHLDVTLVHSIVDALIQGQEFVIKV</sequence>
<name>BPIA1_PIG</name>
<reference key="1">
    <citation type="journal article" date="2005" name="Biochim. Biophys. Acta">
        <title>Porcine SPLUNC1: molecular cloning, characterization and expression analysis.</title>
        <authorList>
            <person name="Larsen K."/>
            <person name="Madsen L.B."/>
            <person name="Bendixen C."/>
        </authorList>
    </citation>
    <scope>NUCLEOTIDE SEQUENCE [GENOMIC DNA / MRNA]</scope>
    <scope>TISSUE SPECIFICITY</scope>
    <source>
        <tissue>Lung</tissue>
    </source>
</reference>
<proteinExistence type="evidence at transcript level"/>
<comment type="function">
    <text evidence="2">Lipid-binding protein which shows high specificity for the surfactant phospholipid dipalmitoylphosphatidylcholine (DPPC). Plays a role in the innate immune responses of the upper airways. Reduces the surface tension in secretions from airway epithelia and inhibits the formation of biofilm by pathogenic Gram-negative bacteria, such as P.aeruginosa and K.pneumoniae. Negatively regulates proteolytic cleavage of SCNN1G, an event that is required for activation of the epithelial sodium channel (ENaC), and thereby contributes to airway surface liquid homeostasis and proper clearance of mucus. Plays a role in the airway inflammatory response after exposure to irritants. May attract macrophages and neutrophils.</text>
</comment>
<comment type="subunit">
    <text evidence="1">Monomer. Interacts (via N-terminus) with SCNN1B, a subunit of the heterotrimeric epithelial sodium channel (ENaC); this inhibits proteolytic activation of ENaC (By similarity).</text>
</comment>
<comment type="subcellular location">
    <subcellularLocation>
        <location evidence="1">Secreted</location>
    </subcellularLocation>
    <text evidence="1">Apical side of airway epithelial cells. Detected in airway surface liquid, nasal mucus and sputum (By similarity).</text>
</comment>
<comment type="tissue specificity">
    <text evidence="4">Expressed in lung and trachea.</text>
</comment>
<comment type="similarity">
    <text evidence="5">Belongs to the BPI/LBP/Plunc superfamily. Plunc family.</text>
</comment>
<comment type="caution">
    <text evidence="2">Reported to bind to bacterial lipopolysaccharide (LPS) in vitro. However, the in vivo significance of this is uncertain since other studies indicate little or no specificity for LPS.</text>
</comment>
<feature type="signal peptide" evidence="3">
    <location>
        <begin position="1"/>
        <end position="15"/>
    </location>
</feature>
<feature type="chain" id="PRO_0000017177" description="BPI fold-containing family A member 1">
    <location>
        <begin position="16"/>
        <end position="249"/>
    </location>
</feature>
<feature type="region of interest" description="Important for surfactant activity and antibacterial properties" evidence="2">
    <location>
        <begin position="81"/>
        <end position="86"/>
    </location>
</feature>
<feature type="glycosylation site" description="N-linked (GlcNAc...) asparagine" evidence="3">
    <location>
        <position position="151"/>
    </location>
</feature>
<feature type="disulfide bond" evidence="2">
    <location>
        <begin position="173"/>
        <end position="217"/>
    </location>
</feature>
<organism>
    <name type="scientific">Sus scrofa</name>
    <name type="common">Pig</name>
    <dbReference type="NCBI Taxonomy" id="9823"/>
    <lineage>
        <taxon>Eukaryota</taxon>
        <taxon>Metazoa</taxon>
        <taxon>Chordata</taxon>
        <taxon>Craniata</taxon>
        <taxon>Vertebrata</taxon>
        <taxon>Euteleostomi</taxon>
        <taxon>Mammalia</taxon>
        <taxon>Eutheria</taxon>
        <taxon>Laurasiatheria</taxon>
        <taxon>Artiodactyla</taxon>
        <taxon>Suina</taxon>
        <taxon>Suidae</taxon>
        <taxon>Sus</taxon>
    </lineage>
</organism>
<dbReference type="EMBL" id="AY733063">
    <property type="protein sequence ID" value="AAU43633.1"/>
    <property type="molecule type" value="mRNA"/>
</dbReference>
<dbReference type="EMBL" id="AY733064">
    <property type="protein sequence ID" value="AAU43634.1"/>
    <property type="molecule type" value="Genomic_DNA"/>
</dbReference>
<dbReference type="RefSeq" id="NP_001005727.1">
    <property type="nucleotide sequence ID" value="NM_001005727.1"/>
</dbReference>
<dbReference type="SMR" id="Q5XW65"/>
<dbReference type="FunCoup" id="Q5XW65">
    <property type="interactions" value="299"/>
</dbReference>
<dbReference type="STRING" id="9823.ENSSSCP00000030681"/>
<dbReference type="GlyCosmos" id="Q5XW65">
    <property type="glycosylation" value="1 site, No reported glycans"/>
</dbReference>
<dbReference type="GlyGen" id="Q5XW65">
    <property type="glycosylation" value="1 site"/>
</dbReference>
<dbReference type="PaxDb" id="9823-ENSSSCP00000007731"/>
<dbReference type="Ensembl" id="ENSSSCT00090015832">
    <property type="protein sequence ID" value="ENSSSCP00090010260"/>
    <property type="gene ID" value="ENSSSCG00090008765"/>
</dbReference>
<dbReference type="GeneID" id="449524"/>
<dbReference type="KEGG" id="ssc:449524"/>
<dbReference type="CTD" id="51297"/>
<dbReference type="eggNOG" id="ENOG502SR58">
    <property type="taxonomic scope" value="Eukaryota"/>
</dbReference>
<dbReference type="InParanoid" id="Q5XW65"/>
<dbReference type="OrthoDB" id="9835719at2759"/>
<dbReference type="Proteomes" id="UP000008227">
    <property type="component" value="Unplaced"/>
</dbReference>
<dbReference type="Proteomes" id="UP000314985">
    <property type="component" value="Unplaced"/>
</dbReference>
<dbReference type="Proteomes" id="UP000694570">
    <property type="component" value="Unplaced"/>
</dbReference>
<dbReference type="Proteomes" id="UP000694571">
    <property type="component" value="Unplaced"/>
</dbReference>
<dbReference type="Proteomes" id="UP000694720">
    <property type="component" value="Unplaced"/>
</dbReference>
<dbReference type="Proteomes" id="UP000694722">
    <property type="component" value="Unplaced"/>
</dbReference>
<dbReference type="Proteomes" id="UP000694723">
    <property type="component" value="Unplaced"/>
</dbReference>
<dbReference type="Proteomes" id="UP000694724">
    <property type="component" value="Unplaced"/>
</dbReference>
<dbReference type="Proteomes" id="UP000694725">
    <property type="component" value="Unplaced"/>
</dbReference>
<dbReference type="Proteomes" id="UP000694726">
    <property type="component" value="Unplaced"/>
</dbReference>
<dbReference type="Proteomes" id="UP000694727">
    <property type="component" value="Unplaced"/>
</dbReference>
<dbReference type="Proteomes" id="UP000694728">
    <property type="component" value="Unplaced"/>
</dbReference>
<dbReference type="GO" id="GO:0005615">
    <property type="term" value="C:extracellular space"/>
    <property type="evidence" value="ECO:0000250"/>
    <property type="project" value="UniProtKB"/>
</dbReference>
<dbReference type="GO" id="GO:0008289">
    <property type="term" value="F:lipid binding"/>
    <property type="evidence" value="ECO:0007669"/>
    <property type="project" value="UniProtKB-KW"/>
</dbReference>
<dbReference type="GO" id="GO:0019731">
    <property type="term" value="P:antibacterial humoral response"/>
    <property type="evidence" value="ECO:0000250"/>
    <property type="project" value="UniProtKB"/>
</dbReference>
<dbReference type="GO" id="GO:0061844">
    <property type="term" value="P:antimicrobial humoral immune response mediated by antimicrobial peptide"/>
    <property type="evidence" value="ECO:0000318"/>
    <property type="project" value="GO_Central"/>
</dbReference>
<dbReference type="GO" id="GO:0002395">
    <property type="term" value="P:immune response in nasopharyngeal-associated lymphoid tissue"/>
    <property type="evidence" value="ECO:0000318"/>
    <property type="project" value="GO_Central"/>
</dbReference>
<dbReference type="GO" id="GO:0045087">
    <property type="term" value="P:innate immune response"/>
    <property type="evidence" value="ECO:0000250"/>
    <property type="project" value="UniProtKB"/>
</dbReference>
<dbReference type="GO" id="GO:0050891">
    <property type="term" value="P:multicellular organismal-level water homeostasis"/>
    <property type="evidence" value="ECO:0000250"/>
    <property type="project" value="UniProtKB"/>
</dbReference>
<dbReference type="GO" id="GO:1900229">
    <property type="term" value="P:negative regulation of single-species biofilm formation in or on host organism"/>
    <property type="evidence" value="ECO:0000250"/>
    <property type="project" value="UniProtKB"/>
</dbReference>
<dbReference type="GO" id="GO:1902305">
    <property type="term" value="P:regulation of sodium ion transmembrane transport"/>
    <property type="evidence" value="ECO:0000250"/>
    <property type="project" value="UniProtKB"/>
</dbReference>
<dbReference type="GO" id="GO:0043129">
    <property type="term" value="P:surfactant homeostasis"/>
    <property type="evidence" value="ECO:0000250"/>
    <property type="project" value="UniProtKB"/>
</dbReference>
<dbReference type="FunFam" id="3.15.10.10:FF:000003">
    <property type="entry name" value="BPI fold-containing family A member 1"/>
    <property type="match status" value="1"/>
</dbReference>
<dbReference type="Gene3D" id="3.15.10.10">
    <property type="entry name" value="Bactericidal permeability-increasing protein, domain 1"/>
    <property type="match status" value="1"/>
</dbReference>
<dbReference type="InterPro" id="IPR017943">
    <property type="entry name" value="Bactericidal_perm-incr_a/b_dom"/>
</dbReference>
<dbReference type="InterPro" id="IPR051902">
    <property type="entry name" value="BPI_fold-superfamily_member"/>
</dbReference>
<dbReference type="InterPro" id="IPR017942">
    <property type="entry name" value="Lipid-bd_serum_glycop_N"/>
</dbReference>
<dbReference type="PANTHER" id="PTHR47015">
    <property type="entry name" value="BPI FOLD-CONTAINING FAMILY A MEMBER 1"/>
    <property type="match status" value="1"/>
</dbReference>
<dbReference type="PANTHER" id="PTHR47015:SF1">
    <property type="entry name" value="BPI FOLD-CONTAINING FAMILY A MEMBER 1"/>
    <property type="match status" value="1"/>
</dbReference>
<dbReference type="Pfam" id="PF01273">
    <property type="entry name" value="LBP_BPI_CETP"/>
    <property type="match status" value="1"/>
</dbReference>
<dbReference type="SUPFAM" id="SSF55394">
    <property type="entry name" value="Bactericidal permeability-increasing protein, BPI"/>
    <property type="match status" value="1"/>
</dbReference>